<sequence length="105" mass="11674">QPKSDPLVTLFLPSLKNLQANKVTLVCLVSEFYPGTLVVDWKVDGVPVTQGVETTQPSKQTNNKYMVSSYLTLISDQWMPHSRYSCRVTHEGNTVEKSVSPAECS</sequence>
<name>IGLL1_MUSSP</name>
<accession>P20765</accession>
<organism>
    <name type="scientific">Mus spretus</name>
    <name type="common">Western Mediterranean mouse</name>
    <name type="synonym">Algerian mouse</name>
    <dbReference type="NCBI Taxonomy" id="10096"/>
    <lineage>
        <taxon>Eukaryota</taxon>
        <taxon>Metazoa</taxon>
        <taxon>Chordata</taxon>
        <taxon>Craniata</taxon>
        <taxon>Vertebrata</taxon>
        <taxon>Euteleostomi</taxon>
        <taxon>Mammalia</taxon>
        <taxon>Eutheria</taxon>
        <taxon>Euarchontoglires</taxon>
        <taxon>Glires</taxon>
        <taxon>Rodentia</taxon>
        <taxon>Myomorpha</taxon>
        <taxon>Muroidea</taxon>
        <taxon>Muridae</taxon>
        <taxon>Murinae</taxon>
        <taxon>Mus</taxon>
        <taxon>Mus</taxon>
    </lineage>
</organism>
<gene>
    <name type="primary">Igll1</name>
</gene>
<proteinExistence type="inferred from homology"/>
<keyword id="KW-1015">Disulfide bond</keyword>
<keyword id="KW-0256">Endoplasmic reticulum</keyword>
<keyword id="KW-0393">Immunoglobulin domain</keyword>
<keyword id="KW-0964">Secreted</keyword>
<evidence type="ECO:0000250" key="1"/>
<evidence type="ECO:0000250" key="2">
    <source>
        <dbReference type="UniProtKB" id="P15814"/>
    </source>
</evidence>
<evidence type="ECO:0000250" key="3">
    <source>
        <dbReference type="UniProtKB" id="P20764"/>
    </source>
</evidence>
<evidence type="ECO:0000255" key="4">
    <source>
        <dbReference type="PROSITE-ProRule" id="PRU00114"/>
    </source>
</evidence>
<reference key="1">
    <citation type="journal article" date="1988" name="EMBO J.">
        <title>Conservation of the immunoglobulin C lambda 5 gene in the Mus genus.</title>
        <authorList>
            <person name="Mami F."/>
            <person name="Cazenave P.-A."/>
            <person name="Kindt T.J."/>
        </authorList>
    </citation>
    <scope>NUCLEOTIDE SEQUENCE [GENOMIC DNA]</scope>
</reference>
<comment type="function">
    <text evidence="2">Critical for B-cell development.</text>
</comment>
<comment type="subunit">
    <text evidence="1 2 3">Associates non-covalently with VPREB1A (By similarity). Interacts with SYNV1/HRD1 (via N-terminus); this interaction leads to increased IGLL1 ubiquitination and degradation in pre-B cells, possibly through a lysosomal, not proteasomal, pathway (By similarity).</text>
</comment>
<comment type="subcellular location">
    <subcellularLocation>
        <location evidence="3">Endoplasmic reticulum</location>
    </subcellularLocation>
    <subcellularLocation>
        <location evidence="3">Secreted</location>
    </subcellularLocation>
    <text evidence="3">In pre-B cells, localizes predominantly to the endoplasmic reticulum.</text>
</comment>
<feature type="chain" id="PRO_0000153612" description="Immunoglobulin lambda-like polypeptide 1">
    <location>
        <begin position="1" status="less than"/>
        <end position="105"/>
    </location>
</feature>
<feature type="domain" description="Ig-like C1-type">
    <location>
        <begin position="6"/>
        <end position="100"/>
    </location>
</feature>
<feature type="region of interest" description="C region" evidence="1">
    <location>
        <begin position="1"/>
        <end position="105"/>
    </location>
</feature>
<feature type="disulfide bond" evidence="4">
    <location>
        <begin position="27"/>
        <end position="86"/>
    </location>
</feature>
<feature type="disulfide bond" description="Interchain (with a heavy chain)" evidence="4">
    <location>
        <position position="104"/>
    </location>
</feature>
<feature type="non-terminal residue">
    <location>
        <position position="1"/>
    </location>
</feature>
<protein>
    <recommendedName>
        <fullName>Immunoglobulin lambda-like polypeptide 1</fullName>
    </recommendedName>
    <alternativeName>
        <fullName>CD179 antigen-like family member B</fullName>
    </alternativeName>
    <alternativeName>
        <fullName>Ig lambda-5</fullName>
    </alternativeName>
    <cdAntigenName>CD179b</cdAntigenName>
</protein>
<dbReference type="EMBL" id="M35582">
    <property type="protein sequence ID" value="AAA39152.1"/>
    <property type="molecule type" value="Genomic_DNA"/>
</dbReference>
<dbReference type="PIR" id="S00259">
    <property type="entry name" value="S00259"/>
</dbReference>
<dbReference type="SMR" id="P20765"/>
<dbReference type="MGI" id="MGI:96529">
    <property type="gene designation" value="Igll1"/>
</dbReference>
<dbReference type="GO" id="GO:0005783">
    <property type="term" value="C:endoplasmic reticulum"/>
    <property type="evidence" value="ECO:0007669"/>
    <property type="project" value="UniProtKB-SubCell"/>
</dbReference>
<dbReference type="GO" id="GO:0005576">
    <property type="term" value="C:extracellular region"/>
    <property type="evidence" value="ECO:0007669"/>
    <property type="project" value="UniProtKB-SubCell"/>
</dbReference>
<dbReference type="CDD" id="cd07699">
    <property type="entry name" value="IgC1_L"/>
    <property type="match status" value="1"/>
</dbReference>
<dbReference type="FunFam" id="2.60.40.10:FF:000283">
    <property type="entry name" value="Immunoglobulin kappa constant"/>
    <property type="match status" value="1"/>
</dbReference>
<dbReference type="Gene3D" id="2.60.40.10">
    <property type="entry name" value="Immunoglobulins"/>
    <property type="match status" value="1"/>
</dbReference>
<dbReference type="InterPro" id="IPR007110">
    <property type="entry name" value="Ig-like_dom"/>
</dbReference>
<dbReference type="InterPro" id="IPR036179">
    <property type="entry name" value="Ig-like_dom_sf"/>
</dbReference>
<dbReference type="InterPro" id="IPR013783">
    <property type="entry name" value="Ig-like_fold"/>
</dbReference>
<dbReference type="InterPro" id="IPR003006">
    <property type="entry name" value="Ig/MHC_CS"/>
</dbReference>
<dbReference type="InterPro" id="IPR003597">
    <property type="entry name" value="Ig_C1-set"/>
</dbReference>
<dbReference type="InterPro" id="IPR050160">
    <property type="entry name" value="MHC/Immunoglobulin"/>
</dbReference>
<dbReference type="PANTHER" id="PTHR19944:SF98">
    <property type="entry name" value="IG-LIKE DOMAIN-CONTAINING PROTEIN"/>
    <property type="match status" value="1"/>
</dbReference>
<dbReference type="PANTHER" id="PTHR19944">
    <property type="entry name" value="MHC CLASS II-RELATED"/>
    <property type="match status" value="1"/>
</dbReference>
<dbReference type="Pfam" id="PF07654">
    <property type="entry name" value="C1-set"/>
    <property type="match status" value="1"/>
</dbReference>
<dbReference type="SMART" id="SM00407">
    <property type="entry name" value="IGc1"/>
    <property type="match status" value="1"/>
</dbReference>
<dbReference type="SUPFAM" id="SSF48726">
    <property type="entry name" value="Immunoglobulin"/>
    <property type="match status" value="1"/>
</dbReference>
<dbReference type="PROSITE" id="PS50835">
    <property type="entry name" value="IG_LIKE"/>
    <property type="match status" value="1"/>
</dbReference>
<dbReference type="PROSITE" id="PS00290">
    <property type="entry name" value="IG_MHC"/>
    <property type="match status" value="1"/>
</dbReference>